<gene>
    <name evidence="1" type="primary">rpsO</name>
    <name type="ordered locus">SPC_3354</name>
</gene>
<organism>
    <name type="scientific">Salmonella paratyphi C (strain RKS4594)</name>
    <dbReference type="NCBI Taxonomy" id="476213"/>
    <lineage>
        <taxon>Bacteria</taxon>
        <taxon>Pseudomonadati</taxon>
        <taxon>Pseudomonadota</taxon>
        <taxon>Gammaproteobacteria</taxon>
        <taxon>Enterobacterales</taxon>
        <taxon>Enterobacteriaceae</taxon>
        <taxon>Salmonella</taxon>
    </lineage>
</organism>
<keyword id="KW-0687">Ribonucleoprotein</keyword>
<keyword id="KW-0689">Ribosomal protein</keyword>
<keyword id="KW-0694">RNA-binding</keyword>
<keyword id="KW-0699">rRNA-binding</keyword>
<name>RS15_SALPC</name>
<comment type="function">
    <text evidence="1">One of the primary rRNA binding proteins, it binds directly to 16S rRNA where it helps nucleate assembly of the platform of the 30S subunit by binding and bridging several RNA helices of the 16S rRNA.</text>
</comment>
<comment type="function">
    <text evidence="1">Forms an intersubunit bridge (bridge B4) with the 23S rRNA of the 50S subunit in the ribosome.</text>
</comment>
<comment type="subunit">
    <text evidence="1">Part of the 30S ribosomal subunit. Forms a bridge to the 50S subunit in the 70S ribosome, contacting the 23S rRNA.</text>
</comment>
<comment type="similarity">
    <text evidence="1">Belongs to the universal ribosomal protein uS15 family.</text>
</comment>
<protein>
    <recommendedName>
        <fullName evidence="1">Small ribosomal subunit protein uS15</fullName>
    </recommendedName>
    <alternativeName>
        <fullName evidence="2">30S ribosomal protein S15</fullName>
    </alternativeName>
</protein>
<reference key="1">
    <citation type="journal article" date="2009" name="PLoS ONE">
        <title>Salmonella paratyphi C: genetic divergence from Salmonella choleraesuis and pathogenic convergence with Salmonella typhi.</title>
        <authorList>
            <person name="Liu W.-Q."/>
            <person name="Feng Y."/>
            <person name="Wang Y."/>
            <person name="Zou Q.-H."/>
            <person name="Chen F."/>
            <person name="Guo J.-T."/>
            <person name="Peng Y.-H."/>
            <person name="Jin Y."/>
            <person name="Li Y.-G."/>
            <person name="Hu S.-N."/>
            <person name="Johnston R.N."/>
            <person name="Liu G.-R."/>
            <person name="Liu S.-L."/>
        </authorList>
    </citation>
    <scope>NUCLEOTIDE SEQUENCE [LARGE SCALE GENOMIC DNA]</scope>
    <source>
        <strain>RKS4594</strain>
    </source>
</reference>
<accession>C0PZ51</accession>
<dbReference type="EMBL" id="CP000857">
    <property type="protein sequence ID" value="ACN47439.1"/>
    <property type="molecule type" value="Genomic_DNA"/>
</dbReference>
<dbReference type="RefSeq" id="WP_000059465.1">
    <property type="nucleotide sequence ID" value="NC_012125.1"/>
</dbReference>
<dbReference type="SMR" id="C0PZ51"/>
<dbReference type="GeneID" id="93035884"/>
<dbReference type="KEGG" id="sei:SPC_3354"/>
<dbReference type="HOGENOM" id="CLU_148518_0_0_6"/>
<dbReference type="Proteomes" id="UP000001599">
    <property type="component" value="Chromosome"/>
</dbReference>
<dbReference type="GO" id="GO:0022627">
    <property type="term" value="C:cytosolic small ribosomal subunit"/>
    <property type="evidence" value="ECO:0007669"/>
    <property type="project" value="TreeGrafter"/>
</dbReference>
<dbReference type="GO" id="GO:0019843">
    <property type="term" value="F:rRNA binding"/>
    <property type="evidence" value="ECO:0007669"/>
    <property type="project" value="UniProtKB-UniRule"/>
</dbReference>
<dbReference type="GO" id="GO:0003735">
    <property type="term" value="F:structural constituent of ribosome"/>
    <property type="evidence" value="ECO:0007669"/>
    <property type="project" value="InterPro"/>
</dbReference>
<dbReference type="GO" id="GO:0006412">
    <property type="term" value="P:translation"/>
    <property type="evidence" value="ECO:0007669"/>
    <property type="project" value="UniProtKB-UniRule"/>
</dbReference>
<dbReference type="CDD" id="cd00353">
    <property type="entry name" value="Ribosomal_S15p_S13e"/>
    <property type="match status" value="1"/>
</dbReference>
<dbReference type="FunFam" id="1.10.287.10:FF:000002">
    <property type="entry name" value="30S ribosomal protein S15"/>
    <property type="match status" value="1"/>
</dbReference>
<dbReference type="Gene3D" id="6.10.250.3130">
    <property type="match status" value="1"/>
</dbReference>
<dbReference type="Gene3D" id="1.10.287.10">
    <property type="entry name" value="S15/NS1, RNA-binding"/>
    <property type="match status" value="1"/>
</dbReference>
<dbReference type="HAMAP" id="MF_01343_B">
    <property type="entry name" value="Ribosomal_uS15_B"/>
    <property type="match status" value="1"/>
</dbReference>
<dbReference type="InterPro" id="IPR000589">
    <property type="entry name" value="Ribosomal_uS15"/>
</dbReference>
<dbReference type="InterPro" id="IPR005290">
    <property type="entry name" value="Ribosomal_uS15_bac-type"/>
</dbReference>
<dbReference type="InterPro" id="IPR009068">
    <property type="entry name" value="uS15_NS1_RNA-bd_sf"/>
</dbReference>
<dbReference type="NCBIfam" id="TIGR00952">
    <property type="entry name" value="S15_bact"/>
    <property type="match status" value="1"/>
</dbReference>
<dbReference type="PANTHER" id="PTHR23321">
    <property type="entry name" value="RIBOSOMAL PROTEIN S15, BACTERIAL AND ORGANELLAR"/>
    <property type="match status" value="1"/>
</dbReference>
<dbReference type="PANTHER" id="PTHR23321:SF26">
    <property type="entry name" value="SMALL RIBOSOMAL SUBUNIT PROTEIN US15M"/>
    <property type="match status" value="1"/>
</dbReference>
<dbReference type="Pfam" id="PF00312">
    <property type="entry name" value="Ribosomal_S15"/>
    <property type="match status" value="1"/>
</dbReference>
<dbReference type="SMART" id="SM01387">
    <property type="entry name" value="Ribosomal_S15"/>
    <property type="match status" value="1"/>
</dbReference>
<dbReference type="SUPFAM" id="SSF47060">
    <property type="entry name" value="S15/NS1 RNA-binding domain"/>
    <property type="match status" value="1"/>
</dbReference>
<dbReference type="PROSITE" id="PS00362">
    <property type="entry name" value="RIBOSOMAL_S15"/>
    <property type="match status" value="1"/>
</dbReference>
<sequence>MSLSTEATAKIVSEFGRDANDTGSTDVQVALLTAQINHLQGHFAEHKKDHHSRRGLLRMVSQRRKLLDYLKRKDVARYTALIERLGLRR</sequence>
<feature type="chain" id="PRO_1000166435" description="Small ribosomal subunit protein uS15">
    <location>
        <begin position="1"/>
        <end position="89"/>
    </location>
</feature>
<proteinExistence type="inferred from homology"/>
<evidence type="ECO:0000255" key="1">
    <source>
        <dbReference type="HAMAP-Rule" id="MF_01343"/>
    </source>
</evidence>
<evidence type="ECO:0000305" key="2"/>